<accession>A0A1Y9G8H0</accession>
<accession>Q9XYP9</accession>
<organism evidence="10">
    <name type="scientific">Anopheles albimanus</name>
    <name type="common">New world malaria mosquito</name>
    <dbReference type="NCBI Taxonomy" id="7167"/>
    <lineage>
        <taxon>Eukaryota</taxon>
        <taxon>Metazoa</taxon>
        <taxon>Ecdysozoa</taxon>
        <taxon>Arthropoda</taxon>
        <taxon>Hexapoda</taxon>
        <taxon>Insecta</taxon>
        <taxon>Pterygota</taxon>
        <taxon>Neoptera</taxon>
        <taxon>Endopterygota</taxon>
        <taxon>Diptera</taxon>
        <taxon>Nematocera</taxon>
        <taxon>Culicoidea</taxon>
        <taxon>Culicidae</taxon>
        <taxon>Anophelinae</taxon>
        <taxon>Anopheles</taxon>
    </lineage>
</organism>
<reference evidence="9" key="1">
    <citation type="journal article" date="1999" name="J. Exp. Biol.">
        <title>Purification and cloning of the salivary peroxidase/catechol oxidase of the mosquito Anopheles albimanus.</title>
        <authorList>
            <person name="Ribeiro J.M."/>
            <person name="Valenzuela J.G."/>
        </authorList>
    </citation>
    <scope>NUCLEOTIDE SEQUENCE [MRNA]</scope>
    <scope>PROTEIN SEQUENCE OF 22-67</scope>
    <scope>IDENTIFICATION BY MASS SPECTROMETRY</scope>
    <scope>FUNCTION</scope>
    <scope>CATALYTIC ACTIVITY</scope>
    <scope>TISSUE SPECIFICITY</scope>
    <source>
        <tissue evidence="9">Salivary gland</tissue>
    </source>
</reference>
<reference evidence="8" key="2">
    <citation type="journal article" date="1993" name="J. Exp. Biol.">
        <title>The salivary catechol oxidase/peroxidase activities of the mosquito Anopheles albimanus.</title>
        <authorList>
            <person name="Ribeiro J.M."/>
            <person name="Nussenzveig R.H."/>
        </authorList>
    </citation>
    <scope>FUNCTION</scope>
    <scope>CATALYTIC ACTIVITY</scope>
    <scope>SUBCELLULAR LOCATION</scope>
    <scope>TISSUE SPECIFICITY</scope>
</reference>
<dbReference type="EC" id="1.10.3.1" evidence="5"/>
<dbReference type="EC" id="1.11.1.-" evidence="4 5"/>
<dbReference type="EMBL" id="AF118391">
    <property type="protein sequence ID" value="AAD22196.1"/>
    <property type="molecule type" value="mRNA"/>
</dbReference>
<dbReference type="SMR" id="A0A1Y9G8H0"/>
<dbReference type="PeroxiBase" id="4104">
    <property type="entry name" value="AalPxt01"/>
</dbReference>
<dbReference type="EnsemblMetazoa" id="AALB016040-RA">
    <property type="protein sequence ID" value="AALB016040-PA"/>
    <property type="gene ID" value="AALB016040"/>
</dbReference>
<dbReference type="VEuPathDB" id="VectorBase:AALB016040"/>
<dbReference type="VEuPathDB" id="VectorBase:AALB20_036207"/>
<dbReference type="Proteomes" id="UP000069272">
    <property type="component" value="Chromosome 3R"/>
</dbReference>
<dbReference type="GO" id="GO:0005576">
    <property type="term" value="C:extracellular region"/>
    <property type="evidence" value="ECO:0007669"/>
    <property type="project" value="UniProtKB-SubCell"/>
</dbReference>
<dbReference type="GO" id="GO:0020037">
    <property type="term" value="F:heme binding"/>
    <property type="evidence" value="ECO:0007669"/>
    <property type="project" value="InterPro"/>
</dbReference>
<dbReference type="GO" id="GO:0046872">
    <property type="term" value="F:metal ion binding"/>
    <property type="evidence" value="ECO:0007669"/>
    <property type="project" value="UniProtKB-KW"/>
</dbReference>
<dbReference type="GO" id="GO:0004601">
    <property type="term" value="F:peroxidase activity"/>
    <property type="evidence" value="ECO:0007669"/>
    <property type="project" value="UniProtKB-KW"/>
</dbReference>
<dbReference type="GO" id="GO:0006979">
    <property type="term" value="P:response to oxidative stress"/>
    <property type="evidence" value="ECO:0007669"/>
    <property type="project" value="InterPro"/>
</dbReference>
<dbReference type="GO" id="GO:0042311">
    <property type="term" value="P:vasodilation"/>
    <property type="evidence" value="ECO:0007669"/>
    <property type="project" value="UniProtKB-KW"/>
</dbReference>
<dbReference type="CDD" id="cd09823">
    <property type="entry name" value="peroxinectin_like"/>
    <property type="match status" value="1"/>
</dbReference>
<dbReference type="FunFam" id="1.10.640.10:FF:000003">
    <property type="entry name" value="chorion peroxidase"/>
    <property type="match status" value="1"/>
</dbReference>
<dbReference type="Gene3D" id="1.10.640.10">
    <property type="entry name" value="Haem peroxidase domain superfamily, animal type"/>
    <property type="match status" value="1"/>
</dbReference>
<dbReference type="InterPro" id="IPR019791">
    <property type="entry name" value="Haem_peroxidase_animal"/>
</dbReference>
<dbReference type="InterPro" id="IPR010255">
    <property type="entry name" value="Haem_peroxidase_sf"/>
</dbReference>
<dbReference type="InterPro" id="IPR037120">
    <property type="entry name" value="Haem_peroxidase_sf_animal"/>
</dbReference>
<dbReference type="PANTHER" id="PTHR11475">
    <property type="entry name" value="OXIDASE/PEROXIDASE"/>
    <property type="match status" value="1"/>
</dbReference>
<dbReference type="PANTHER" id="PTHR11475:SF86">
    <property type="entry name" value="PEROXIDASE"/>
    <property type="match status" value="1"/>
</dbReference>
<dbReference type="Pfam" id="PF03098">
    <property type="entry name" value="An_peroxidase"/>
    <property type="match status" value="1"/>
</dbReference>
<dbReference type="PRINTS" id="PR00457">
    <property type="entry name" value="ANPEROXIDASE"/>
</dbReference>
<dbReference type="SUPFAM" id="SSF48113">
    <property type="entry name" value="Heme-dependent peroxidases"/>
    <property type="match status" value="1"/>
</dbReference>
<dbReference type="PROSITE" id="PS50292">
    <property type="entry name" value="PEROXIDASE_3"/>
    <property type="match status" value="1"/>
</dbReference>
<keyword id="KW-0106">Calcium</keyword>
<keyword id="KW-0903">Direct protein sequencing</keyword>
<keyword id="KW-1015">Disulfide bond</keyword>
<keyword id="KW-0325">Glycoprotein</keyword>
<keyword id="KW-0349">Heme</keyword>
<keyword id="KW-0408">Iron</keyword>
<keyword id="KW-0479">Metal-binding</keyword>
<keyword id="KW-0560">Oxidoreductase</keyword>
<keyword id="KW-0575">Peroxidase</keyword>
<keyword id="KW-0964">Secreted</keyword>
<keyword id="KW-0732">Signal</keyword>
<keyword id="KW-0838">Vasoactive</keyword>
<keyword id="KW-0840">Vasodilator</keyword>
<feature type="signal peptide" evidence="1">
    <location>
        <begin position="1"/>
        <end position="21"/>
    </location>
</feature>
<feature type="chain" id="PRO_0000461053" description="Salivary peroxidase/catechol oxidase" evidence="1">
    <location>
        <begin position="22"/>
        <end position="592"/>
    </location>
</feature>
<feature type="active site" description="Proton acceptor" evidence="2">
    <location>
        <position position="110"/>
    </location>
</feature>
<feature type="binding site" evidence="2">
    <location>
        <position position="111"/>
    </location>
    <ligand>
        <name>Ca(2+)</name>
        <dbReference type="ChEBI" id="CHEBI:29108"/>
    </ligand>
</feature>
<feature type="binding site" evidence="2">
    <location>
        <position position="187"/>
    </location>
    <ligand>
        <name>Ca(2+)</name>
        <dbReference type="ChEBI" id="CHEBI:29108"/>
    </ligand>
</feature>
<feature type="binding site" evidence="2">
    <location>
        <position position="189"/>
    </location>
    <ligand>
        <name>Ca(2+)</name>
        <dbReference type="ChEBI" id="CHEBI:29108"/>
    </ligand>
</feature>
<feature type="binding site" evidence="2">
    <location>
        <position position="191"/>
    </location>
    <ligand>
        <name>Ca(2+)</name>
        <dbReference type="ChEBI" id="CHEBI:29108"/>
    </ligand>
</feature>
<feature type="binding site" evidence="2">
    <location>
        <position position="193"/>
    </location>
    <ligand>
        <name>Ca(2+)</name>
        <dbReference type="ChEBI" id="CHEBI:29108"/>
    </ligand>
</feature>
<feature type="binding site" description="axial binding residue" evidence="2">
    <location>
        <position position="353"/>
    </location>
    <ligand>
        <name>heme b</name>
        <dbReference type="ChEBI" id="CHEBI:60344"/>
    </ligand>
    <ligandPart>
        <name>Fe</name>
        <dbReference type="ChEBI" id="CHEBI:18248"/>
    </ligandPart>
</feature>
<feature type="site" description="Transition state stabilizer" evidence="2">
    <location>
        <position position="251"/>
    </location>
</feature>
<feature type="glycosylation site" description="N-linked (GlcNAc...) asparagine" evidence="3">
    <location>
        <position position="25"/>
    </location>
</feature>
<feature type="glycosylation site" description="N-linked (GlcNAc...) asparagine" evidence="3">
    <location>
        <position position="230"/>
    </location>
</feature>
<feature type="glycosylation site" description="N-linked (GlcNAc...) asparagine" evidence="3">
    <location>
        <position position="366"/>
    </location>
</feature>
<feature type="disulfide bond" evidence="2">
    <location>
        <begin position="24"/>
        <end position="37"/>
    </location>
</feature>
<feature type="disulfide bond" evidence="2">
    <location>
        <begin position="235"/>
        <end position="244"/>
    </location>
</feature>
<feature type="disulfide bond" evidence="2">
    <location>
        <begin position="452"/>
        <end position="509"/>
    </location>
</feature>
<feature type="disulfide bond" evidence="2">
    <location>
        <begin position="553"/>
        <end position="580"/>
    </location>
</feature>
<feature type="sequence conflict" description="In Ref. 1; AAD22196." evidence="8" ref="1">
    <original>A</original>
    <variation>V</variation>
    <location>
        <position position="57"/>
    </location>
</feature>
<feature type="sequence conflict" description="In Ref. 1; AAD22196." evidence="8" ref="1">
    <original>Q</original>
    <variation>H</variation>
    <location>
        <position position="275"/>
    </location>
</feature>
<feature type="sequence conflict" description="In Ref. 1; AAD22196." evidence="8" ref="1">
    <original>I</original>
    <variation>N</variation>
    <location>
        <position position="297"/>
    </location>
</feature>
<feature type="sequence conflict" description="In Ref. 1; AAD22196." evidence="8" ref="1">
    <location>
        <position position="302"/>
    </location>
</feature>
<feature type="sequence conflict" description="In Ref. 1; AAD22196." evidence="8" ref="1">
    <original>S</original>
    <variation>N</variation>
    <location>
        <position position="311"/>
    </location>
</feature>
<evidence type="ECO:0000255" key="1"/>
<evidence type="ECO:0000255" key="2">
    <source>
        <dbReference type="PROSITE-ProRule" id="PRU00298"/>
    </source>
</evidence>
<evidence type="ECO:0000255" key="3">
    <source>
        <dbReference type="PROSITE-ProRule" id="PRU00498"/>
    </source>
</evidence>
<evidence type="ECO:0000269" key="4">
    <source>
    </source>
</evidence>
<evidence type="ECO:0000269" key="5">
    <source>
    </source>
</evidence>
<evidence type="ECO:0000303" key="6">
    <source>
    </source>
</evidence>
<evidence type="ECO:0000303" key="7">
    <source>
    </source>
</evidence>
<evidence type="ECO:0000305" key="8"/>
<evidence type="ECO:0000312" key="9">
    <source>
        <dbReference type="EMBL" id="AAD22196.1"/>
    </source>
</evidence>
<evidence type="ECO:0000312" key="10">
    <source>
        <dbReference type="Proteomes" id="UP000069272"/>
    </source>
</evidence>
<gene>
    <name evidence="9" type="primary">PEROX</name>
</gene>
<proteinExistence type="evidence at protein level"/>
<name>PERO_ANOAL</name>
<sequence>MWMFLKLLLFVCSSWWSCAQASNCNATSPYRTLDGTCNNLQNPNWGAANTAYGRLIAADYGDGVKSPRKAASGADLPSARLLSMKLFGDEHVLEPAFTLLSMQFGQLVAHDMGFTSGSTDILPCCSEGKPVSNPVPRCYPIPVASDDPVMGSAGVQCLDFLRTITDCDADPSSCSNSKKAEQLNIATSFIDLSVVYGNSVEENTPIREFTGGLMKVETRDGSDWPPRNPNASTACVQRSPEDACYLTGDARANISPQMAILHILFLREHNRIAKQLAALHPEWNDEKLFQEARRINIAQYQQIVFYEWLPSFLPLPDNGGKRSLSSVLDHQYRADVNPTTLNSNAHAAFRYFHSAILGHLHLDYENRTKAGEISFTDHTLNPAILEAPCKYAQLSRGMATQSMGRIDLNIDHELKHNLFKFNAPFGNDLRAIDIQRARDHGLPSYNSFREKCGLPKAASFDDFTSLLHSPQDAARLASVYASVDDVELTVAGLFEKHIPGTQVGATFRCILLEQFHRTRVGDRFFFETSDPIVGFSREQFKQLRKANIARLLCDNTPKLEGMQSKAFAAIDAGSNKVLPCSSLPAVDLDPWK</sequence>
<comment type="function">
    <text evidence="4 5">Inhibits noradrenaline-induced smooth muscle contraction in the host, probably due to the oxidation of noradrenaline, resulting in vasodilation (PubMed:10069970, PubMed:8393473). Exhibits peroxidase activity (PubMed:10069970, PubMed:8393473).</text>
</comment>
<comment type="catalytic activity">
    <reaction evidence="5">
        <text>2 catechol + O2 = 2 1,2-benzoquinone + 2 H2O</text>
        <dbReference type="Rhea" id="RHEA:21632"/>
        <dbReference type="ChEBI" id="CHEBI:15377"/>
        <dbReference type="ChEBI" id="CHEBI:15379"/>
        <dbReference type="ChEBI" id="CHEBI:17253"/>
        <dbReference type="ChEBI" id="CHEBI:18135"/>
        <dbReference type="EC" id="1.10.3.1"/>
    </reaction>
</comment>
<comment type="subcellular location">
    <subcellularLocation>
        <location evidence="5">Secreted</location>
    </subcellularLocation>
</comment>
<comment type="tissue specificity">
    <text evidence="4 5">Female salivary gland.</text>
</comment>
<comment type="similarity">
    <text evidence="8">Belongs to the peroxidase family. XPO subfamily.</text>
</comment>
<protein>
    <recommendedName>
        <fullName evidence="6 7">Salivary peroxidase/catechol oxidase</fullName>
        <ecNumber evidence="5">1.10.3.1</ecNumber>
        <ecNumber evidence="4 5">1.11.1.-</ecNumber>
    </recommendedName>
</protein>